<protein>
    <recommendedName>
        <fullName evidence="1">Zinc import ATP-binding protein ZnuC</fullName>
        <ecNumber evidence="1">7.2.2.20</ecNumber>
    </recommendedName>
</protein>
<feature type="chain" id="PRO_0000281495" description="Zinc import ATP-binding protein ZnuC">
    <location>
        <begin position="1"/>
        <end position="298"/>
    </location>
</feature>
<feature type="domain" description="ABC transporter" evidence="1">
    <location>
        <begin position="17"/>
        <end position="232"/>
    </location>
</feature>
<feature type="region of interest" description="Disordered" evidence="2">
    <location>
        <begin position="273"/>
        <end position="298"/>
    </location>
</feature>
<feature type="compositionally biased region" description="Basic and acidic residues" evidence="2">
    <location>
        <begin position="276"/>
        <end position="298"/>
    </location>
</feature>
<feature type="binding site" evidence="1">
    <location>
        <begin position="49"/>
        <end position="56"/>
    </location>
    <ligand>
        <name>ATP</name>
        <dbReference type="ChEBI" id="CHEBI:30616"/>
    </ligand>
</feature>
<sequence>MDKKSSHPAGAARDILIELRNAGVYRDGRWLVRNVDLSVERGEIVTLIGPNGAGKSTAAKMALHILKPDEGMVSHKPGLRIGYVPQKINIDRTLPLSVERLMTLTGPLPRKEIDAALEAVGIAHLAKAETAHLSGGEFQRALMARALARKPDIMVLDEPVQGVDFSGEAALYELIARLRDDTGCGVLLISHDLHLVMAATDRVICLNGHVCCSGTPRDVTSSPEYVRLFGSRAVGPLAVYEHHHDHTHLPDGRVLYADGTTADPIAGSTMGPRGHCHVEDGHHHDHEHHHHEGGQPRA</sequence>
<keyword id="KW-0067">ATP-binding</keyword>
<keyword id="KW-0997">Cell inner membrane</keyword>
<keyword id="KW-1003">Cell membrane</keyword>
<keyword id="KW-0406">Ion transport</keyword>
<keyword id="KW-0472">Membrane</keyword>
<keyword id="KW-0547">Nucleotide-binding</keyword>
<keyword id="KW-1278">Translocase</keyword>
<keyword id="KW-0813">Transport</keyword>
<keyword id="KW-0862">Zinc</keyword>
<keyword id="KW-0864">Zinc transport</keyword>
<accession>Q576K0</accession>
<comment type="function">
    <text evidence="1">Part of the ABC transporter complex ZnuABC involved in zinc import. Responsible for energy coupling to the transport system.</text>
</comment>
<comment type="catalytic activity">
    <reaction evidence="1">
        <text>Zn(2+)(out) + ATP(in) + H2O(in) = Zn(2+)(in) + ADP(in) + phosphate(in) + H(+)(in)</text>
        <dbReference type="Rhea" id="RHEA:29795"/>
        <dbReference type="ChEBI" id="CHEBI:15377"/>
        <dbReference type="ChEBI" id="CHEBI:15378"/>
        <dbReference type="ChEBI" id="CHEBI:29105"/>
        <dbReference type="ChEBI" id="CHEBI:30616"/>
        <dbReference type="ChEBI" id="CHEBI:43474"/>
        <dbReference type="ChEBI" id="CHEBI:456216"/>
        <dbReference type="EC" id="7.2.2.20"/>
    </reaction>
</comment>
<comment type="subunit">
    <text evidence="1">The complex is composed of two ATP-binding proteins (ZnuC), two transmembrane proteins (ZnuB) and a solute-binding protein (ZnuA).</text>
</comment>
<comment type="subcellular location">
    <subcellularLocation>
        <location evidence="1">Cell inner membrane</location>
        <topology evidence="1">Peripheral membrane protein</topology>
    </subcellularLocation>
</comment>
<comment type="similarity">
    <text evidence="1">Belongs to the ABC transporter superfamily. Zinc importer (TC 3.A.1.15.5) family.</text>
</comment>
<proteinExistence type="inferred from homology"/>
<evidence type="ECO:0000255" key="1">
    <source>
        <dbReference type="HAMAP-Rule" id="MF_01725"/>
    </source>
</evidence>
<evidence type="ECO:0000256" key="2">
    <source>
        <dbReference type="SAM" id="MobiDB-lite"/>
    </source>
</evidence>
<organism>
    <name type="scientific">Brucella abortus biovar 1 (strain 9-941)</name>
    <dbReference type="NCBI Taxonomy" id="262698"/>
    <lineage>
        <taxon>Bacteria</taxon>
        <taxon>Pseudomonadati</taxon>
        <taxon>Pseudomonadota</taxon>
        <taxon>Alphaproteobacteria</taxon>
        <taxon>Hyphomicrobiales</taxon>
        <taxon>Brucellaceae</taxon>
        <taxon>Brucella/Ochrobactrum group</taxon>
        <taxon>Brucella</taxon>
    </lineage>
</organism>
<name>ZNUC_BRUAB</name>
<gene>
    <name evidence="1" type="primary">znuC</name>
    <name type="ordered locus">BruAb2_1060</name>
</gene>
<reference key="1">
    <citation type="journal article" date="2005" name="J. Bacteriol.">
        <title>Completion of the genome sequence of Brucella abortus and comparison to the highly similar genomes of Brucella melitensis and Brucella suis.</title>
        <authorList>
            <person name="Halling S.M."/>
            <person name="Peterson-Burch B.D."/>
            <person name="Bricker B.J."/>
            <person name="Zuerner R.L."/>
            <person name="Qing Z."/>
            <person name="Li L.-L."/>
            <person name="Kapur V."/>
            <person name="Alt D.P."/>
            <person name="Olsen S.C."/>
        </authorList>
    </citation>
    <scope>NUCLEOTIDE SEQUENCE [LARGE SCALE GENOMIC DNA]</scope>
    <source>
        <strain>9-941</strain>
    </source>
</reference>
<dbReference type="EC" id="7.2.2.20" evidence="1"/>
<dbReference type="EMBL" id="AE017224">
    <property type="protein sequence ID" value="AAX76434.1"/>
    <property type="molecule type" value="Genomic_DNA"/>
</dbReference>
<dbReference type="RefSeq" id="WP_002966660.1">
    <property type="nucleotide sequence ID" value="NC_006933.1"/>
</dbReference>
<dbReference type="SMR" id="Q576K0"/>
<dbReference type="EnsemblBacteria" id="AAX76434">
    <property type="protein sequence ID" value="AAX76434"/>
    <property type="gene ID" value="BruAb2_1060"/>
</dbReference>
<dbReference type="KEGG" id="bmb:BruAb2_1060"/>
<dbReference type="HOGENOM" id="CLU_000604_1_11_5"/>
<dbReference type="PRO" id="PR:Q576K0"/>
<dbReference type="Proteomes" id="UP000000540">
    <property type="component" value="Chromosome II"/>
</dbReference>
<dbReference type="GO" id="GO:0005886">
    <property type="term" value="C:plasma membrane"/>
    <property type="evidence" value="ECO:0007669"/>
    <property type="project" value="UniProtKB-SubCell"/>
</dbReference>
<dbReference type="GO" id="GO:0015633">
    <property type="term" value="F:ABC-type zinc transporter activity"/>
    <property type="evidence" value="ECO:0007669"/>
    <property type="project" value="UniProtKB-EC"/>
</dbReference>
<dbReference type="GO" id="GO:0005524">
    <property type="term" value="F:ATP binding"/>
    <property type="evidence" value="ECO:0007669"/>
    <property type="project" value="UniProtKB-KW"/>
</dbReference>
<dbReference type="GO" id="GO:0016887">
    <property type="term" value="F:ATP hydrolysis activity"/>
    <property type="evidence" value="ECO:0007669"/>
    <property type="project" value="InterPro"/>
</dbReference>
<dbReference type="GO" id="GO:0010043">
    <property type="term" value="P:response to zinc ion"/>
    <property type="evidence" value="ECO:0007669"/>
    <property type="project" value="TreeGrafter"/>
</dbReference>
<dbReference type="Gene3D" id="3.40.50.300">
    <property type="entry name" value="P-loop containing nucleotide triphosphate hydrolases"/>
    <property type="match status" value="1"/>
</dbReference>
<dbReference type="InterPro" id="IPR003593">
    <property type="entry name" value="AAA+_ATPase"/>
</dbReference>
<dbReference type="InterPro" id="IPR003439">
    <property type="entry name" value="ABC_transporter-like_ATP-bd"/>
</dbReference>
<dbReference type="InterPro" id="IPR017871">
    <property type="entry name" value="ABC_transporter-like_CS"/>
</dbReference>
<dbReference type="InterPro" id="IPR050153">
    <property type="entry name" value="Metal_Ion_Import_ABC"/>
</dbReference>
<dbReference type="InterPro" id="IPR027417">
    <property type="entry name" value="P-loop_NTPase"/>
</dbReference>
<dbReference type="PANTHER" id="PTHR42734">
    <property type="entry name" value="METAL TRANSPORT SYSTEM ATP-BINDING PROTEIN TM_0124-RELATED"/>
    <property type="match status" value="1"/>
</dbReference>
<dbReference type="PANTHER" id="PTHR42734:SF9">
    <property type="entry name" value="ZINC IMPORT ATP-BINDING PROTEIN ZNUC"/>
    <property type="match status" value="1"/>
</dbReference>
<dbReference type="Pfam" id="PF00005">
    <property type="entry name" value="ABC_tran"/>
    <property type="match status" value="1"/>
</dbReference>
<dbReference type="SMART" id="SM00382">
    <property type="entry name" value="AAA"/>
    <property type="match status" value="1"/>
</dbReference>
<dbReference type="SUPFAM" id="SSF52540">
    <property type="entry name" value="P-loop containing nucleoside triphosphate hydrolases"/>
    <property type="match status" value="1"/>
</dbReference>
<dbReference type="PROSITE" id="PS00211">
    <property type="entry name" value="ABC_TRANSPORTER_1"/>
    <property type="match status" value="1"/>
</dbReference>
<dbReference type="PROSITE" id="PS50893">
    <property type="entry name" value="ABC_TRANSPORTER_2"/>
    <property type="match status" value="1"/>
</dbReference>
<dbReference type="PROSITE" id="PS51298">
    <property type="entry name" value="ZNUC"/>
    <property type="match status" value="1"/>
</dbReference>